<gene>
    <name evidence="1" type="primary">murG</name>
    <name type="ordered locus">FTA_1498</name>
</gene>
<name>MURG_FRATF</name>
<evidence type="ECO:0000255" key="1">
    <source>
        <dbReference type="HAMAP-Rule" id="MF_00033"/>
    </source>
</evidence>
<comment type="function">
    <text evidence="1">Cell wall formation. Catalyzes the transfer of a GlcNAc subunit on undecaprenyl-pyrophosphoryl-MurNAc-pentapeptide (lipid intermediate I) to form undecaprenyl-pyrophosphoryl-MurNAc-(pentapeptide)GlcNAc (lipid intermediate II).</text>
</comment>
<comment type="catalytic activity">
    <reaction evidence="1">
        <text>di-trans,octa-cis-undecaprenyl diphospho-N-acetyl-alpha-D-muramoyl-L-alanyl-D-glutamyl-meso-2,6-diaminopimeloyl-D-alanyl-D-alanine + UDP-N-acetyl-alpha-D-glucosamine = di-trans,octa-cis-undecaprenyl diphospho-[N-acetyl-alpha-D-glucosaminyl-(1-&gt;4)]-N-acetyl-alpha-D-muramoyl-L-alanyl-D-glutamyl-meso-2,6-diaminopimeloyl-D-alanyl-D-alanine + UDP + H(+)</text>
        <dbReference type="Rhea" id="RHEA:31227"/>
        <dbReference type="ChEBI" id="CHEBI:15378"/>
        <dbReference type="ChEBI" id="CHEBI:57705"/>
        <dbReference type="ChEBI" id="CHEBI:58223"/>
        <dbReference type="ChEBI" id="CHEBI:61387"/>
        <dbReference type="ChEBI" id="CHEBI:61388"/>
        <dbReference type="EC" id="2.4.1.227"/>
    </reaction>
</comment>
<comment type="pathway">
    <text evidence="1">Cell wall biogenesis; peptidoglycan biosynthesis.</text>
</comment>
<comment type="subcellular location">
    <subcellularLocation>
        <location evidence="1">Cell inner membrane</location>
        <topology evidence="1">Peripheral membrane protein</topology>
        <orientation evidence="1">Cytoplasmic side</orientation>
    </subcellularLocation>
</comment>
<comment type="similarity">
    <text evidence="1">Belongs to the glycosyltransferase 28 family. MurG subfamily.</text>
</comment>
<accession>A7NDC0</accession>
<dbReference type="EC" id="2.4.1.227" evidence="1"/>
<dbReference type="EMBL" id="CP000803">
    <property type="protein sequence ID" value="ABU61973.1"/>
    <property type="molecule type" value="Genomic_DNA"/>
</dbReference>
<dbReference type="RefSeq" id="WP_003016681.1">
    <property type="nucleotide sequence ID" value="NC_009749.1"/>
</dbReference>
<dbReference type="SMR" id="A7NDC0"/>
<dbReference type="CAZy" id="GT28">
    <property type="family name" value="Glycosyltransferase Family 28"/>
</dbReference>
<dbReference type="KEGG" id="fta:FTA_1498"/>
<dbReference type="HOGENOM" id="CLU_037404_2_0_6"/>
<dbReference type="UniPathway" id="UPA00219"/>
<dbReference type="GO" id="GO:0005886">
    <property type="term" value="C:plasma membrane"/>
    <property type="evidence" value="ECO:0007669"/>
    <property type="project" value="UniProtKB-SubCell"/>
</dbReference>
<dbReference type="GO" id="GO:0051991">
    <property type="term" value="F:UDP-N-acetyl-D-glucosamine:N-acetylmuramoyl-L-alanyl-D-glutamyl-meso-2,6-diaminopimelyl-D-alanyl-D-alanine-diphosphoundecaprenol 4-beta-N-acetylglucosaminlytransferase activity"/>
    <property type="evidence" value="ECO:0007669"/>
    <property type="project" value="RHEA"/>
</dbReference>
<dbReference type="GO" id="GO:0050511">
    <property type="term" value="F:undecaprenyldiphospho-muramoylpentapeptide beta-N-acetylglucosaminyltransferase activity"/>
    <property type="evidence" value="ECO:0007669"/>
    <property type="project" value="UniProtKB-UniRule"/>
</dbReference>
<dbReference type="GO" id="GO:0005975">
    <property type="term" value="P:carbohydrate metabolic process"/>
    <property type="evidence" value="ECO:0007669"/>
    <property type="project" value="InterPro"/>
</dbReference>
<dbReference type="GO" id="GO:0051301">
    <property type="term" value="P:cell division"/>
    <property type="evidence" value="ECO:0007669"/>
    <property type="project" value="UniProtKB-KW"/>
</dbReference>
<dbReference type="GO" id="GO:0071555">
    <property type="term" value="P:cell wall organization"/>
    <property type="evidence" value="ECO:0007669"/>
    <property type="project" value="UniProtKB-KW"/>
</dbReference>
<dbReference type="GO" id="GO:0030259">
    <property type="term" value="P:lipid glycosylation"/>
    <property type="evidence" value="ECO:0007669"/>
    <property type="project" value="UniProtKB-UniRule"/>
</dbReference>
<dbReference type="GO" id="GO:0009252">
    <property type="term" value="P:peptidoglycan biosynthetic process"/>
    <property type="evidence" value="ECO:0007669"/>
    <property type="project" value="UniProtKB-UniRule"/>
</dbReference>
<dbReference type="GO" id="GO:0008360">
    <property type="term" value="P:regulation of cell shape"/>
    <property type="evidence" value="ECO:0007669"/>
    <property type="project" value="UniProtKB-KW"/>
</dbReference>
<dbReference type="CDD" id="cd03785">
    <property type="entry name" value="GT28_MurG"/>
    <property type="match status" value="1"/>
</dbReference>
<dbReference type="Gene3D" id="3.40.50.2000">
    <property type="entry name" value="Glycogen Phosphorylase B"/>
    <property type="match status" value="2"/>
</dbReference>
<dbReference type="HAMAP" id="MF_00033">
    <property type="entry name" value="MurG"/>
    <property type="match status" value="1"/>
</dbReference>
<dbReference type="InterPro" id="IPR006009">
    <property type="entry name" value="GlcNAc_MurG"/>
</dbReference>
<dbReference type="InterPro" id="IPR007235">
    <property type="entry name" value="Glyco_trans_28_C"/>
</dbReference>
<dbReference type="InterPro" id="IPR004276">
    <property type="entry name" value="GlycoTrans_28_N"/>
</dbReference>
<dbReference type="NCBIfam" id="TIGR01133">
    <property type="entry name" value="murG"/>
    <property type="match status" value="1"/>
</dbReference>
<dbReference type="PANTHER" id="PTHR21015:SF22">
    <property type="entry name" value="GLYCOSYLTRANSFERASE"/>
    <property type="match status" value="1"/>
</dbReference>
<dbReference type="PANTHER" id="PTHR21015">
    <property type="entry name" value="UDP-N-ACETYLGLUCOSAMINE--N-ACETYLMURAMYL-(PENTAPEPTIDE) PYROPHOSPHORYL-UNDECAPRENOL N-ACETYLGLUCOSAMINE TRANSFERASE 1"/>
    <property type="match status" value="1"/>
</dbReference>
<dbReference type="Pfam" id="PF04101">
    <property type="entry name" value="Glyco_tran_28_C"/>
    <property type="match status" value="1"/>
</dbReference>
<dbReference type="Pfam" id="PF03033">
    <property type="entry name" value="Glyco_transf_28"/>
    <property type="match status" value="1"/>
</dbReference>
<dbReference type="SUPFAM" id="SSF53756">
    <property type="entry name" value="UDP-Glycosyltransferase/glycogen phosphorylase"/>
    <property type="match status" value="1"/>
</dbReference>
<proteinExistence type="inferred from homology"/>
<protein>
    <recommendedName>
        <fullName evidence="1">UDP-N-acetylglucosamine--N-acetylmuramyl-(pentapeptide) pyrophosphoryl-undecaprenol N-acetylglucosamine transferase</fullName>
        <ecNumber evidence="1">2.4.1.227</ecNumber>
    </recommendedName>
    <alternativeName>
        <fullName evidence="1">Undecaprenyl-PP-MurNAc-pentapeptide-UDPGlcNAc GlcNAc transferase</fullName>
    </alternativeName>
</protein>
<sequence length="371" mass="40829">MSLENKNIIITAGGTGGHIYPALAIAELLRQNKANVTWVGTPNSMEASIVPEYFNIQFIKSSGVRRKGIIKKITFPLKLAYNTLKSRSLLKKLKANLVIGFGGYVSGPICLAAAQINIPVIIHEQNAKIGLTNRILAKFATTICLAFEIENLHKQFSSKQLAKTKIVGNPVRKDIVALNDKARIYTDSSTLKILVLGGSQGAKAINEIIPKLIQKSNEQGINIKVWHQTGKLSLEETKDAYKDISQNHIKDIAAFIDDMAIAYNWADLVICRAGALTVSECAIAGLPAIFIPLPSAVDDHQFFNAQNIVNNNAGFCLRQQQMTLENLLAIIKPLNQDRSKLEQMSKMAKKTLIKNSSEQILDCVKKILNNK</sequence>
<keyword id="KW-0131">Cell cycle</keyword>
<keyword id="KW-0132">Cell division</keyword>
<keyword id="KW-0997">Cell inner membrane</keyword>
<keyword id="KW-1003">Cell membrane</keyword>
<keyword id="KW-0133">Cell shape</keyword>
<keyword id="KW-0961">Cell wall biogenesis/degradation</keyword>
<keyword id="KW-0328">Glycosyltransferase</keyword>
<keyword id="KW-0472">Membrane</keyword>
<keyword id="KW-0573">Peptidoglycan synthesis</keyword>
<keyword id="KW-0808">Transferase</keyword>
<organism>
    <name type="scientific">Francisella tularensis subsp. holarctica (strain FTNF002-00 / FTA)</name>
    <dbReference type="NCBI Taxonomy" id="458234"/>
    <lineage>
        <taxon>Bacteria</taxon>
        <taxon>Pseudomonadati</taxon>
        <taxon>Pseudomonadota</taxon>
        <taxon>Gammaproteobacteria</taxon>
        <taxon>Thiotrichales</taxon>
        <taxon>Francisellaceae</taxon>
        <taxon>Francisella</taxon>
    </lineage>
</organism>
<reference key="1">
    <citation type="journal article" date="2009" name="PLoS ONE">
        <title>Complete genome sequence of Francisella tularensis subspecies holarctica FTNF002-00.</title>
        <authorList>
            <person name="Barabote R.D."/>
            <person name="Xie G."/>
            <person name="Brettin T.S."/>
            <person name="Hinrichs S.H."/>
            <person name="Fey P.D."/>
            <person name="Jay J.J."/>
            <person name="Engle J.L."/>
            <person name="Godbole S.D."/>
            <person name="Noronha J.M."/>
            <person name="Scheuermann R.H."/>
            <person name="Zhou L.W."/>
            <person name="Lion C."/>
            <person name="Dempsey M.P."/>
        </authorList>
    </citation>
    <scope>NUCLEOTIDE SEQUENCE [LARGE SCALE GENOMIC DNA]</scope>
    <source>
        <strain>FTNF002-00 / FTA</strain>
    </source>
</reference>
<feature type="chain" id="PRO_1000002646" description="UDP-N-acetylglucosamine--N-acetylmuramyl-(pentapeptide) pyrophosphoryl-undecaprenol N-acetylglucosamine transferase">
    <location>
        <begin position="1"/>
        <end position="371"/>
    </location>
</feature>
<feature type="binding site" evidence="1">
    <location>
        <begin position="15"/>
        <end position="17"/>
    </location>
    <ligand>
        <name>UDP-N-acetyl-alpha-D-glucosamine</name>
        <dbReference type="ChEBI" id="CHEBI:57705"/>
    </ligand>
</feature>
<feature type="binding site" evidence="1">
    <location>
        <position position="126"/>
    </location>
    <ligand>
        <name>UDP-N-acetyl-alpha-D-glucosamine</name>
        <dbReference type="ChEBI" id="CHEBI:57705"/>
    </ligand>
</feature>
<feature type="binding site" evidence="1">
    <location>
        <position position="172"/>
    </location>
    <ligand>
        <name>UDP-N-acetyl-alpha-D-glucosamine</name>
        <dbReference type="ChEBI" id="CHEBI:57705"/>
    </ligand>
</feature>
<feature type="binding site" evidence="1">
    <location>
        <position position="199"/>
    </location>
    <ligand>
        <name>UDP-N-acetyl-alpha-D-glucosamine</name>
        <dbReference type="ChEBI" id="CHEBI:57705"/>
    </ligand>
</feature>
<feature type="binding site" evidence="1">
    <location>
        <position position="256"/>
    </location>
    <ligand>
        <name>UDP-N-acetyl-alpha-D-glucosamine</name>
        <dbReference type="ChEBI" id="CHEBI:57705"/>
    </ligand>
</feature>
<feature type="binding site" evidence="1">
    <location>
        <begin position="275"/>
        <end position="280"/>
    </location>
    <ligand>
        <name>UDP-N-acetyl-alpha-D-glucosamine</name>
        <dbReference type="ChEBI" id="CHEBI:57705"/>
    </ligand>
</feature>
<feature type="binding site" evidence="1">
    <location>
        <position position="301"/>
    </location>
    <ligand>
        <name>UDP-N-acetyl-alpha-D-glucosamine</name>
        <dbReference type="ChEBI" id="CHEBI:57705"/>
    </ligand>
</feature>